<organism>
    <name type="scientific">Nitratidesulfovibrio vulgaris (strain DP4)</name>
    <name type="common">Desulfovibrio vulgaris</name>
    <dbReference type="NCBI Taxonomy" id="391774"/>
    <lineage>
        <taxon>Bacteria</taxon>
        <taxon>Pseudomonadati</taxon>
        <taxon>Thermodesulfobacteriota</taxon>
        <taxon>Desulfovibrionia</taxon>
        <taxon>Desulfovibrionales</taxon>
        <taxon>Desulfovibrionaceae</taxon>
        <taxon>Nitratidesulfovibrio</taxon>
    </lineage>
</organism>
<sequence>MKVRPSVKKICPKCKVIRRRGVLRVICENPRHKQRQG</sequence>
<gene>
    <name evidence="1" type="primary">rpmJ</name>
    <name type="ordered locus">Dvul_1743</name>
</gene>
<dbReference type="EMBL" id="CP000527">
    <property type="protein sequence ID" value="ABM28760.1"/>
    <property type="molecule type" value="Genomic_DNA"/>
</dbReference>
<dbReference type="RefSeq" id="WP_010938620.1">
    <property type="nucleotide sequence ID" value="NC_008751.1"/>
</dbReference>
<dbReference type="SMR" id="A1VE94"/>
<dbReference type="KEGG" id="dvl:Dvul_1743"/>
<dbReference type="HOGENOM" id="CLU_135723_6_2_7"/>
<dbReference type="Proteomes" id="UP000009173">
    <property type="component" value="Chromosome"/>
</dbReference>
<dbReference type="GO" id="GO:0005737">
    <property type="term" value="C:cytoplasm"/>
    <property type="evidence" value="ECO:0007669"/>
    <property type="project" value="UniProtKB-ARBA"/>
</dbReference>
<dbReference type="GO" id="GO:1990904">
    <property type="term" value="C:ribonucleoprotein complex"/>
    <property type="evidence" value="ECO:0007669"/>
    <property type="project" value="UniProtKB-KW"/>
</dbReference>
<dbReference type="GO" id="GO:0005840">
    <property type="term" value="C:ribosome"/>
    <property type="evidence" value="ECO:0007669"/>
    <property type="project" value="UniProtKB-KW"/>
</dbReference>
<dbReference type="GO" id="GO:0003735">
    <property type="term" value="F:structural constituent of ribosome"/>
    <property type="evidence" value="ECO:0007669"/>
    <property type="project" value="InterPro"/>
</dbReference>
<dbReference type="GO" id="GO:0006412">
    <property type="term" value="P:translation"/>
    <property type="evidence" value="ECO:0007669"/>
    <property type="project" value="UniProtKB-UniRule"/>
</dbReference>
<dbReference type="HAMAP" id="MF_00251">
    <property type="entry name" value="Ribosomal_bL36"/>
    <property type="match status" value="1"/>
</dbReference>
<dbReference type="InterPro" id="IPR000473">
    <property type="entry name" value="Ribosomal_bL36"/>
</dbReference>
<dbReference type="InterPro" id="IPR035977">
    <property type="entry name" value="Ribosomal_bL36_sp"/>
</dbReference>
<dbReference type="NCBIfam" id="TIGR01022">
    <property type="entry name" value="rpmJ_bact"/>
    <property type="match status" value="1"/>
</dbReference>
<dbReference type="PANTHER" id="PTHR42888">
    <property type="entry name" value="50S RIBOSOMAL PROTEIN L36, CHLOROPLASTIC"/>
    <property type="match status" value="1"/>
</dbReference>
<dbReference type="PANTHER" id="PTHR42888:SF1">
    <property type="entry name" value="LARGE RIBOSOMAL SUBUNIT PROTEIN BL36C"/>
    <property type="match status" value="1"/>
</dbReference>
<dbReference type="Pfam" id="PF00444">
    <property type="entry name" value="Ribosomal_L36"/>
    <property type="match status" value="1"/>
</dbReference>
<dbReference type="SUPFAM" id="SSF57840">
    <property type="entry name" value="Ribosomal protein L36"/>
    <property type="match status" value="1"/>
</dbReference>
<dbReference type="PROSITE" id="PS00828">
    <property type="entry name" value="RIBOSOMAL_L36"/>
    <property type="match status" value="1"/>
</dbReference>
<keyword id="KW-0687">Ribonucleoprotein</keyword>
<keyword id="KW-0689">Ribosomal protein</keyword>
<reference key="1">
    <citation type="journal article" date="2009" name="Environ. Microbiol.">
        <title>Contribution of mobile genetic elements to Desulfovibrio vulgaris genome plasticity.</title>
        <authorList>
            <person name="Walker C.B."/>
            <person name="Stolyar S."/>
            <person name="Chivian D."/>
            <person name="Pinel N."/>
            <person name="Gabster J.A."/>
            <person name="Dehal P.S."/>
            <person name="He Z."/>
            <person name="Yang Z.K."/>
            <person name="Yen H.C."/>
            <person name="Zhou J."/>
            <person name="Wall J.D."/>
            <person name="Hazen T.C."/>
            <person name="Arkin A.P."/>
            <person name="Stahl D.A."/>
        </authorList>
    </citation>
    <scope>NUCLEOTIDE SEQUENCE [LARGE SCALE GENOMIC DNA]</scope>
    <source>
        <strain>DP4</strain>
    </source>
</reference>
<feature type="chain" id="PRO_0000302197" description="Large ribosomal subunit protein bL36">
    <location>
        <begin position="1"/>
        <end position="37"/>
    </location>
</feature>
<proteinExistence type="inferred from homology"/>
<protein>
    <recommendedName>
        <fullName evidence="1">Large ribosomal subunit protein bL36</fullName>
    </recommendedName>
    <alternativeName>
        <fullName evidence="2">50S ribosomal protein L36</fullName>
    </alternativeName>
</protein>
<accession>A1VE94</accession>
<name>RL36_NITV4</name>
<evidence type="ECO:0000255" key="1">
    <source>
        <dbReference type="HAMAP-Rule" id="MF_00251"/>
    </source>
</evidence>
<evidence type="ECO:0000305" key="2"/>
<comment type="similarity">
    <text evidence="1">Belongs to the bacterial ribosomal protein bL36 family.</text>
</comment>